<reference key="1">
    <citation type="journal article" date="2010" name="Genome Biol. Evol.">
        <title>Continuing evolution of Burkholderia mallei through genome reduction and large-scale rearrangements.</title>
        <authorList>
            <person name="Losada L."/>
            <person name="Ronning C.M."/>
            <person name="DeShazer D."/>
            <person name="Woods D."/>
            <person name="Fedorova N."/>
            <person name="Kim H.S."/>
            <person name="Shabalina S.A."/>
            <person name="Pearson T.R."/>
            <person name="Brinkac L."/>
            <person name="Tan P."/>
            <person name="Nandi T."/>
            <person name="Crabtree J."/>
            <person name="Badger J."/>
            <person name="Beckstrom-Sternberg S."/>
            <person name="Saqib M."/>
            <person name="Schutzer S.E."/>
            <person name="Keim P."/>
            <person name="Nierman W.C."/>
        </authorList>
    </citation>
    <scope>NUCLEOTIDE SEQUENCE [LARGE SCALE GENOMIC DNA]</scope>
    <source>
        <strain>NCTC 10229</strain>
    </source>
</reference>
<name>SYA_BURM9</name>
<sequence length="874" mass="94695">MKAAEIREKFLKFFESKGHTIVRSSSLVPGNDPTLLFTNSGMVQFKDVFLGAETRPYSRATTAQRSVRAGGKHNDLENVGYTARHHTFFEMLGNFSFGDYFKRDAIHYAWELLTSVYKLPADKLWVTVYHDDDEAYDIWAKEVGVPAERIIRIGDNKGARYASDNFWQMGDTGPCGPCSEIFYDHGPDVWGGPPGSPEEDGDRYIEIWNLVFMQFNRDAQGNMTRLPKPCVDTGMGLERIAAVLQHVHSNYEIDLFQQLIKASARETGVADLANNSLKVIADHIRACSFLIVDGVIPGNEGRGYVLRRIVRRAIRHGYKLGRKAPFFHKLVADLVAEMGAAYPELKEAEPRVTDVLRQEEERFFETIEHGMSILEAALAELDAAGGKTLDGELAFKLHDTYGFPLDLTADVCRERGVTVDEPAFDDAMARQREQARAAGKFKATQGLEYTGAKTTFHGYEEIAFDDAKVVALYVEGASVGEVKAGESAVVVLDHTPFYAESGGQVGDQGVLANAATRFAVGDTLKVQADVIGHHGELEQGTLKVGDVVRAEIDAARRARTARNHSATHLMHKALRDVLGSHVQQKGSLVDADKTRFDFAHNAPLTDDEIRRVEAIVNEQVLANAPGIVRVMPYDDAVKGGAMALFGEKYGDEVRVLDLGFSRELCGGTHVHRTGDIGLFKIVAEGGVAAGIRRVEAITGDNAVRYVQALDARVNAAAAALKAQPSELLQRIGQVQDQVKSLEKELGALKSKLASSQGDELAQQAVEVGGVHVLAATLDGADAKTLRETVDKLKDKLKSAAIVLAAVDGGKVSLIAGVTADASKKVKAGELVNFVAQQVGGKGGGRPDMAQAGGTEPAKLPAALAGVKGWVEARL</sequence>
<feature type="chain" id="PRO_0000347524" description="Alanine--tRNA ligase">
    <location>
        <begin position="1"/>
        <end position="874"/>
    </location>
</feature>
<feature type="binding site" evidence="1">
    <location>
        <position position="564"/>
    </location>
    <ligand>
        <name>Zn(2+)</name>
        <dbReference type="ChEBI" id="CHEBI:29105"/>
    </ligand>
</feature>
<feature type="binding site" evidence="1">
    <location>
        <position position="568"/>
    </location>
    <ligand>
        <name>Zn(2+)</name>
        <dbReference type="ChEBI" id="CHEBI:29105"/>
    </ligand>
</feature>
<feature type="binding site" evidence="1">
    <location>
        <position position="665"/>
    </location>
    <ligand>
        <name>Zn(2+)</name>
        <dbReference type="ChEBI" id="CHEBI:29105"/>
    </ligand>
</feature>
<feature type="binding site" evidence="1">
    <location>
        <position position="669"/>
    </location>
    <ligand>
        <name>Zn(2+)</name>
        <dbReference type="ChEBI" id="CHEBI:29105"/>
    </ligand>
</feature>
<keyword id="KW-0030">Aminoacyl-tRNA synthetase</keyword>
<keyword id="KW-0067">ATP-binding</keyword>
<keyword id="KW-0963">Cytoplasm</keyword>
<keyword id="KW-0436">Ligase</keyword>
<keyword id="KW-0479">Metal-binding</keyword>
<keyword id="KW-0547">Nucleotide-binding</keyword>
<keyword id="KW-0648">Protein biosynthesis</keyword>
<keyword id="KW-0694">RNA-binding</keyword>
<keyword id="KW-0820">tRNA-binding</keyword>
<keyword id="KW-0862">Zinc</keyword>
<accession>A2S3D4</accession>
<dbReference type="EC" id="6.1.1.7" evidence="1"/>
<dbReference type="EMBL" id="CP000546">
    <property type="protein sequence ID" value="ABN03711.1"/>
    <property type="molecule type" value="Genomic_DNA"/>
</dbReference>
<dbReference type="RefSeq" id="WP_004204967.1">
    <property type="nucleotide sequence ID" value="NC_008836.1"/>
</dbReference>
<dbReference type="SMR" id="A2S3D4"/>
<dbReference type="GeneID" id="93059980"/>
<dbReference type="KEGG" id="bml:BMA10229_A0455"/>
<dbReference type="HOGENOM" id="CLU_004485_1_1_4"/>
<dbReference type="Proteomes" id="UP000002283">
    <property type="component" value="Chromosome I"/>
</dbReference>
<dbReference type="GO" id="GO:0005829">
    <property type="term" value="C:cytosol"/>
    <property type="evidence" value="ECO:0007669"/>
    <property type="project" value="TreeGrafter"/>
</dbReference>
<dbReference type="GO" id="GO:0004813">
    <property type="term" value="F:alanine-tRNA ligase activity"/>
    <property type="evidence" value="ECO:0007669"/>
    <property type="project" value="UniProtKB-UniRule"/>
</dbReference>
<dbReference type="GO" id="GO:0002161">
    <property type="term" value="F:aminoacyl-tRNA deacylase activity"/>
    <property type="evidence" value="ECO:0007669"/>
    <property type="project" value="TreeGrafter"/>
</dbReference>
<dbReference type="GO" id="GO:0005524">
    <property type="term" value="F:ATP binding"/>
    <property type="evidence" value="ECO:0007669"/>
    <property type="project" value="UniProtKB-UniRule"/>
</dbReference>
<dbReference type="GO" id="GO:0000049">
    <property type="term" value="F:tRNA binding"/>
    <property type="evidence" value="ECO:0007669"/>
    <property type="project" value="UniProtKB-KW"/>
</dbReference>
<dbReference type="GO" id="GO:0008270">
    <property type="term" value="F:zinc ion binding"/>
    <property type="evidence" value="ECO:0007669"/>
    <property type="project" value="UniProtKB-UniRule"/>
</dbReference>
<dbReference type="GO" id="GO:0006419">
    <property type="term" value="P:alanyl-tRNA aminoacylation"/>
    <property type="evidence" value="ECO:0007669"/>
    <property type="project" value="UniProtKB-UniRule"/>
</dbReference>
<dbReference type="GO" id="GO:0045892">
    <property type="term" value="P:negative regulation of DNA-templated transcription"/>
    <property type="evidence" value="ECO:0007669"/>
    <property type="project" value="TreeGrafter"/>
</dbReference>
<dbReference type="CDD" id="cd00673">
    <property type="entry name" value="AlaRS_core"/>
    <property type="match status" value="1"/>
</dbReference>
<dbReference type="FunFam" id="2.40.30.130:FF:000001">
    <property type="entry name" value="Alanine--tRNA ligase"/>
    <property type="match status" value="1"/>
</dbReference>
<dbReference type="FunFam" id="3.10.310.40:FF:000001">
    <property type="entry name" value="Alanine--tRNA ligase"/>
    <property type="match status" value="1"/>
</dbReference>
<dbReference type="FunFam" id="3.30.54.20:FF:000001">
    <property type="entry name" value="Alanine--tRNA ligase"/>
    <property type="match status" value="1"/>
</dbReference>
<dbReference type="FunFam" id="3.30.930.10:FF:000004">
    <property type="entry name" value="Alanine--tRNA ligase"/>
    <property type="match status" value="1"/>
</dbReference>
<dbReference type="FunFam" id="3.30.980.10:FF:000004">
    <property type="entry name" value="Alanine--tRNA ligase, cytoplasmic"/>
    <property type="match status" value="1"/>
</dbReference>
<dbReference type="Gene3D" id="2.40.30.130">
    <property type="match status" value="1"/>
</dbReference>
<dbReference type="Gene3D" id="3.10.310.40">
    <property type="match status" value="1"/>
</dbReference>
<dbReference type="Gene3D" id="3.30.54.20">
    <property type="match status" value="1"/>
</dbReference>
<dbReference type="Gene3D" id="6.10.250.550">
    <property type="match status" value="1"/>
</dbReference>
<dbReference type="Gene3D" id="3.30.930.10">
    <property type="entry name" value="Bira Bifunctional Protein, Domain 2"/>
    <property type="match status" value="1"/>
</dbReference>
<dbReference type="Gene3D" id="3.30.980.10">
    <property type="entry name" value="Threonyl-trna Synthetase, Chain A, domain 2"/>
    <property type="match status" value="1"/>
</dbReference>
<dbReference type="HAMAP" id="MF_00036_B">
    <property type="entry name" value="Ala_tRNA_synth_B"/>
    <property type="match status" value="1"/>
</dbReference>
<dbReference type="InterPro" id="IPR045864">
    <property type="entry name" value="aa-tRNA-synth_II/BPL/LPL"/>
</dbReference>
<dbReference type="InterPro" id="IPR002318">
    <property type="entry name" value="Ala-tRNA-lgiase_IIc"/>
</dbReference>
<dbReference type="InterPro" id="IPR018162">
    <property type="entry name" value="Ala-tRNA-ligase_IIc_anticod-bd"/>
</dbReference>
<dbReference type="InterPro" id="IPR018165">
    <property type="entry name" value="Ala-tRNA-synth_IIc_core"/>
</dbReference>
<dbReference type="InterPro" id="IPR018164">
    <property type="entry name" value="Ala-tRNA-synth_IIc_N"/>
</dbReference>
<dbReference type="InterPro" id="IPR050058">
    <property type="entry name" value="Ala-tRNA_ligase"/>
</dbReference>
<dbReference type="InterPro" id="IPR023033">
    <property type="entry name" value="Ala_tRNA_ligase_euk/bac"/>
</dbReference>
<dbReference type="InterPro" id="IPR003156">
    <property type="entry name" value="DHHA1_dom"/>
</dbReference>
<dbReference type="InterPro" id="IPR018163">
    <property type="entry name" value="Thr/Ala-tRNA-synth_IIc_edit"/>
</dbReference>
<dbReference type="InterPro" id="IPR009000">
    <property type="entry name" value="Transl_B-barrel_sf"/>
</dbReference>
<dbReference type="InterPro" id="IPR012947">
    <property type="entry name" value="tRNA_SAD"/>
</dbReference>
<dbReference type="NCBIfam" id="TIGR00344">
    <property type="entry name" value="alaS"/>
    <property type="match status" value="1"/>
</dbReference>
<dbReference type="PANTHER" id="PTHR11777:SF9">
    <property type="entry name" value="ALANINE--TRNA LIGASE, CYTOPLASMIC"/>
    <property type="match status" value="1"/>
</dbReference>
<dbReference type="PANTHER" id="PTHR11777">
    <property type="entry name" value="ALANYL-TRNA SYNTHETASE"/>
    <property type="match status" value="1"/>
</dbReference>
<dbReference type="Pfam" id="PF02272">
    <property type="entry name" value="DHHA1"/>
    <property type="match status" value="1"/>
</dbReference>
<dbReference type="Pfam" id="PF01411">
    <property type="entry name" value="tRNA-synt_2c"/>
    <property type="match status" value="1"/>
</dbReference>
<dbReference type="Pfam" id="PF07973">
    <property type="entry name" value="tRNA_SAD"/>
    <property type="match status" value="1"/>
</dbReference>
<dbReference type="PRINTS" id="PR00980">
    <property type="entry name" value="TRNASYNTHALA"/>
</dbReference>
<dbReference type="SMART" id="SM00863">
    <property type="entry name" value="tRNA_SAD"/>
    <property type="match status" value="1"/>
</dbReference>
<dbReference type="SUPFAM" id="SSF55681">
    <property type="entry name" value="Class II aaRS and biotin synthetases"/>
    <property type="match status" value="1"/>
</dbReference>
<dbReference type="SUPFAM" id="SSF101353">
    <property type="entry name" value="Putative anticodon-binding domain of alanyl-tRNA synthetase (AlaRS)"/>
    <property type="match status" value="1"/>
</dbReference>
<dbReference type="SUPFAM" id="SSF55186">
    <property type="entry name" value="ThrRS/AlaRS common domain"/>
    <property type="match status" value="1"/>
</dbReference>
<dbReference type="SUPFAM" id="SSF50447">
    <property type="entry name" value="Translation proteins"/>
    <property type="match status" value="1"/>
</dbReference>
<dbReference type="PROSITE" id="PS50860">
    <property type="entry name" value="AA_TRNA_LIGASE_II_ALA"/>
    <property type="match status" value="1"/>
</dbReference>
<evidence type="ECO:0000255" key="1">
    <source>
        <dbReference type="HAMAP-Rule" id="MF_00036"/>
    </source>
</evidence>
<organism>
    <name type="scientific">Burkholderia mallei (strain NCTC 10229)</name>
    <dbReference type="NCBI Taxonomy" id="412022"/>
    <lineage>
        <taxon>Bacteria</taxon>
        <taxon>Pseudomonadati</taxon>
        <taxon>Pseudomonadota</taxon>
        <taxon>Betaproteobacteria</taxon>
        <taxon>Burkholderiales</taxon>
        <taxon>Burkholderiaceae</taxon>
        <taxon>Burkholderia</taxon>
        <taxon>pseudomallei group</taxon>
    </lineage>
</organism>
<comment type="function">
    <text evidence="1">Catalyzes the attachment of alanine to tRNA(Ala) in a two-step reaction: alanine is first activated by ATP to form Ala-AMP and then transferred to the acceptor end of tRNA(Ala). Also edits incorrectly charged Ser-tRNA(Ala) and Gly-tRNA(Ala) via its editing domain.</text>
</comment>
<comment type="catalytic activity">
    <reaction evidence="1">
        <text>tRNA(Ala) + L-alanine + ATP = L-alanyl-tRNA(Ala) + AMP + diphosphate</text>
        <dbReference type="Rhea" id="RHEA:12540"/>
        <dbReference type="Rhea" id="RHEA-COMP:9657"/>
        <dbReference type="Rhea" id="RHEA-COMP:9923"/>
        <dbReference type="ChEBI" id="CHEBI:30616"/>
        <dbReference type="ChEBI" id="CHEBI:33019"/>
        <dbReference type="ChEBI" id="CHEBI:57972"/>
        <dbReference type="ChEBI" id="CHEBI:78442"/>
        <dbReference type="ChEBI" id="CHEBI:78497"/>
        <dbReference type="ChEBI" id="CHEBI:456215"/>
        <dbReference type="EC" id="6.1.1.7"/>
    </reaction>
</comment>
<comment type="cofactor">
    <cofactor evidence="1">
        <name>Zn(2+)</name>
        <dbReference type="ChEBI" id="CHEBI:29105"/>
    </cofactor>
    <text evidence="1">Binds 1 zinc ion per subunit.</text>
</comment>
<comment type="subcellular location">
    <subcellularLocation>
        <location evidence="1">Cytoplasm</location>
    </subcellularLocation>
</comment>
<comment type="domain">
    <text evidence="1">Consists of three domains; the N-terminal catalytic domain, the editing domain and the C-terminal C-Ala domain. The editing domain removes incorrectly charged amino acids, while the C-Ala domain, along with tRNA(Ala), serves as a bridge to cooperatively bring together the editing and aminoacylation centers thus stimulating deacylation of misacylated tRNAs.</text>
</comment>
<comment type="similarity">
    <text evidence="1">Belongs to the class-II aminoacyl-tRNA synthetase family.</text>
</comment>
<proteinExistence type="inferred from homology"/>
<protein>
    <recommendedName>
        <fullName evidence="1">Alanine--tRNA ligase</fullName>
        <ecNumber evidence="1">6.1.1.7</ecNumber>
    </recommendedName>
    <alternativeName>
        <fullName evidence="1">Alanyl-tRNA synthetase</fullName>
        <shortName evidence="1">AlaRS</shortName>
    </alternativeName>
</protein>
<gene>
    <name evidence="1" type="primary">alaS</name>
    <name type="ordered locus">BMA10229_A0455</name>
</gene>